<proteinExistence type="inferred from homology"/>
<accession>A5ITP2</accession>
<organism>
    <name type="scientific">Staphylococcus aureus (strain JH9)</name>
    <dbReference type="NCBI Taxonomy" id="359786"/>
    <lineage>
        <taxon>Bacteria</taxon>
        <taxon>Bacillati</taxon>
        <taxon>Bacillota</taxon>
        <taxon>Bacilli</taxon>
        <taxon>Bacillales</taxon>
        <taxon>Staphylococcaceae</taxon>
        <taxon>Staphylococcus</taxon>
    </lineage>
</organism>
<name>RS4_STAA9</name>
<comment type="function">
    <text evidence="1">One of the primary rRNA binding proteins, it binds directly to 16S rRNA where it nucleates assembly of the body of the 30S subunit.</text>
</comment>
<comment type="function">
    <text evidence="1">With S5 and S12 plays an important role in translational accuracy.</text>
</comment>
<comment type="subunit">
    <text evidence="1">Part of the 30S ribosomal subunit. Contacts protein S5. The interaction surface between S4 and S5 is involved in control of translational fidelity.</text>
</comment>
<comment type="similarity">
    <text evidence="1">Belongs to the universal ribosomal protein uS4 family.</text>
</comment>
<gene>
    <name evidence="1" type="primary">rpsD</name>
    <name type="ordered locus">SaurJH9_1775</name>
</gene>
<feature type="chain" id="PRO_1000085995" description="Small ribosomal subunit protein uS4">
    <location>
        <begin position="1"/>
        <end position="200"/>
    </location>
</feature>
<feature type="domain" description="S4 RNA-binding" evidence="1">
    <location>
        <begin position="92"/>
        <end position="155"/>
    </location>
</feature>
<evidence type="ECO:0000255" key="1">
    <source>
        <dbReference type="HAMAP-Rule" id="MF_01306"/>
    </source>
</evidence>
<evidence type="ECO:0000305" key="2"/>
<keyword id="KW-0687">Ribonucleoprotein</keyword>
<keyword id="KW-0689">Ribosomal protein</keyword>
<keyword id="KW-0694">RNA-binding</keyword>
<keyword id="KW-0699">rRNA-binding</keyword>
<dbReference type="EMBL" id="CP000703">
    <property type="protein sequence ID" value="ABQ49565.1"/>
    <property type="molecule type" value="Genomic_DNA"/>
</dbReference>
<dbReference type="RefSeq" id="WP_000090512.1">
    <property type="nucleotide sequence ID" value="NC_009487.1"/>
</dbReference>
<dbReference type="SMR" id="A5ITP2"/>
<dbReference type="KEGG" id="saj:SaurJH9_1775"/>
<dbReference type="HOGENOM" id="CLU_092403_0_1_9"/>
<dbReference type="GO" id="GO:0015935">
    <property type="term" value="C:small ribosomal subunit"/>
    <property type="evidence" value="ECO:0007669"/>
    <property type="project" value="InterPro"/>
</dbReference>
<dbReference type="GO" id="GO:0019843">
    <property type="term" value="F:rRNA binding"/>
    <property type="evidence" value="ECO:0007669"/>
    <property type="project" value="UniProtKB-UniRule"/>
</dbReference>
<dbReference type="GO" id="GO:0003735">
    <property type="term" value="F:structural constituent of ribosome"/>
    <property type="evidence" value="ECO:0007669"/>
    <property type="project" value="InterPro"/>
</dbReference>
<dbReference type="GO" id="GO:0042274">
    <property type="term" value="P:ribosomal small subunit biogenesis"/>
    <property type="evidence" value="ECO:0007669"/>
    <property type="project" value="TreeGrafter"/>
</dbReference>
<dbReference type="GO" id="GO:0006412">
    <property type="term" value="P:translation"/>
    <property type="evidence" value="ECO:0007669"/>
    <property type="project" value="UniProtKB-UniRule"/>
</dbReference>
<dbReference type="CDD" id="cd00165">
    <property type="entry name" value="S4"/>
    <property type="match status" value="1"/>
</dbReference>
<dbReference type="FunFam" id="1.10.1050.10:FF:000001">
    <property type="entry name" value="30S ribosomal protein S4"/>
    <property type="match status" value="1"/>
</dbReference>
<dbReference type="FunFam" id="3.10.290.10:FF:000001">
    <property type="entry name" value="30S ribosomal protein S4"/>
    <property type="match status" value="1"/>
</dbReference>
<dbReference type="Gene3D" id="1.10.1050.10">
    <property type="entry name" value="Ribosomal Protein S4 Delta 41, Chain A, domain 1"/>
    <property type="match status" value="1"/>
</dbReference>
<dbReference type="Gene3D" id="3.10.290.10">
    <property type="entry name" value="RNA-binding S4 domain"/>
    <property type="match status" value="1"/>
</dbReference>
<dbReference type="HAMAP" id="MF_01306_B">
    <property type="entry name" value="Ribosomal_uS4_B"/>
    <property type="match status" value="1"/>
</dbReference>
<dbReference type="InterPro" id="IPR022801">
    <property type="entry name" value="Ribosomal_uS4"/>
</dbReference>
<dbReference type="InterPro" id="IPR005709">
    <property type="entry name" value="Ribosomal_uS4_bac-type"/>
</dbReference>
<dbReference type="InterPro" id="IPR018079">
    <property type="entry name" value="Ribosomal_uS4_CS"/>
</dbReference>
<dbReference type="InterPro" id="IPR001912">
    <property type="entry name" value="Ribosomal_uS4_N"/>
</dbReference>
<dbReference type="InterPro" id="IPR002942">
    <property type="entry name" value="S4_RNA-bd"/>
</dbReference>
<dbReference type="InterPro" id="IPR036986">
    <property type="entry name" value="S4_RNA-bd_sf"/>
</dbReference>
<dbReference type="NCBIfam" id="NF003717">
    <property type="entry name" value="PRK05327.1"/>
    <property type="match status" value="1"/>
</dbReference>
<dbReference type="NCBIfam" id="TIGR01017">
    <property type="entry name" value="rpsD_bact"/>
    <property type="match status" value="1"/>
</dbReference>
<dbReference type="PANTHER" id="PTHR11831">
    <property type="entry name" value="30S 40S RIBOSOMAL PROTEIN"/>
    <property type="match status" value="1"/>
</dbReference>
<dbReference type="PANTHER" id="PTHR11831:SF4">
    <property type="entry name" value="SMALL RIBOSOMAL SUBUNIT PROTEIN US4M"/>
    <property type="match status" value="1"/>
</dbReference>
<dbReference type="Pfam" id="PF00163">
    <property type="entry name" value="Ribosomal_S4"/>
    <property type="match status" value="1"/>
</dbReference>
<dbReference type="Pfam" id="PF01479">
    <property type="entry name" value="S4"/>
    <property type="match status" value="1"/>
</dbReference>
<dbReference type="SMART" id="SM01390">
    <property type="entry name" value="Ribosomal_S4"/>
    <property type="match status" value="1"/>
</dbReference>
<dbReference type="SMART" id="SM00363">
    <property type="entry name" value="S4"/>
    <property type="match status" value="1"/>
</dbReference>
<dbReference type="SUPFAM" id="SSF55174">
    <property type="entry name" value="Alpha-L RNA-binding motif"/>
    <property type="match status" value="1"/>
</dbReference>
<dbReference type="PROSITE" id="PS00632">
    <property type="entry name" value="RIBOSOMAL_S4"/>
    <property type="match status" value="1"/>
</dbReference>
<dbReference type="PROSITE" id="PS50889">
    <property type="entry name" value="S4"/>
    <property type="match status" value="1"/>
</dbReference>
<protein>
    <recommendedName>
        <fullName evidence="1">Small ribosomal subunit protein uS4</fullName>
    </recommendedName>
    <alternativeName>
        <fullName evidence="2">30S ribosomal protein S4</fullName>
    </alternativeName>
</protein>
<sequence length="200" mass="23013">MARFRGSNWKKSRRLGISLSGTGKELEKRPYAPGQHGPNQRKKLSEYGLQLREKQKLRYLYGMTERQFRNTFDIAGKKFGVHGENFMILLASRLDAVVYSLGLARTRRQARQLVNHGHILVDGKRVDIPSYSVKPGQTISVREKSQKLNIIVESVEINNFVPEYLNFDADSLTGTFVRLPERSELPAEINEQLIVEYYSR</sequence>
<reference key="1">
    <citation type="submission" date="2007-05" db="EMBL/GenBank/DDBJ databases">
        <title>Complete sequence of chromosome of Staphylococcus aureus subsp. aureus JH9.</title>
        <authorList>
            <consortium name="US DOE Joint Genome Institute"/>
            <person name="Copeland A."/>
            <person name="Lucas S."/>
            <person name="Lapidus A."/>
            <person name="Barry K."/>
            <person name="Detter J.C."/>
            <person name="Glavina del Rio T."/>
            <person name="Hammon N."/>
            <person name="Israni S."/>
            <person name="Pitluck S."/>
            <person name="Chain P."/>
            <person name="Malfatti S."/>
            <person name="Shin M."/>
            <person name="Vergez L."/>
            <person name="Schmutz J."/>
            <person name="Larimer F."/>
            <person name="Land M."/>
            <person name="Hauser L."/>
            <person name="Kyrpides N."/>
            <person name="Kim E."/>
            <person name="Tomasz A."/>
            <person name="Richardson P."/>
        </authorList>
    </citation>
    <scope>NUCLEOTIDE SEQUENCE [LARGE SCALE GENOMIC DNA]</scope>
    <source>
        <strain>JH9</strain>
    </source>
</reference>